<dbReference type="EMBL" id="AE016816">
    <property type="protein sequence ID" value="AAS51430.1"/>
    <property type="molecule type" value="Genomic_DNA"/>
</dbReference>
<dbReference type="RefSeq" id="NP_983606.1">
    <property type="nucleotide sequence ID" value="NM_208959.1"/>
</dbReference>
<dbReference type="SMR" id="Q75BR7"/>
<dbReference type="FunCoup" id="Q75BR7">
    <property type="interactions" value="882"/>
</dbReference>
<dbReference type="STRING" id="284811.Q75BR7"/>
<dbReference type="EnsemblFungi" id="AAS51430">
    <property type="protein sequence ID" value="AAS51430"/>
    <property type="gene ID" value="AGOS_ACR204C"/>
</dbReference>
<dbReference type="GeneID" id="4619738"/>
<dbReference type="KEGG" id="ago:AGOS_ACR204C"/>
<dbReference type="eggNOG" id="KOG1783">
    <property type="taxonomic scope" value="Eukaryota"/>
</dbReference>
<dbReference type="HOGENOM" id="CLU_076902_7_1_1"/>
<dbReference type="InParanoid" id="Q75BR7"/>
<dbReference type="OMA" id="MYISEQK"/>
<dbReference type="OrthoDB" id="268799at2759"/>
<dbReference type="Proteomes" id="UP000000591">
    <property type="component" value="Chromosome III"/>
</dbReference>
<dbReference type="GO" id="GO:1990726">
    <property type="term" value="C:Lsm1-7-Pat1 complex"/>
    <property type="evidence" value="ECO:0007669"/>
    <property type="project" value="EnsemblFungi"/>
</dbReference>
<dbReference type="GO" id="GO:0005730">
    <property type="term" value="C:nucleolus"/>
    <property type="evidence" value="ECO:0000318"/>
    <property type="project" value="GO_Central"/>
</dbReference>
<dbReference type="GO" id="GO:0000932">
    <property type="term" value="C:P-body"/>
    <property type="evidence" value="ECO:0000318"/>
    <property type="project" value="GO_Central"/>
</dbReference>
<dbReference type="GO" id="GO:0005732">
    <property type="term" value="C:sno(s)RNA-containing ribonucleoprotein complex"/>
    <property type="evidence" value="ECO:0000318"/>
    <property type="project" value="GO_Central"/>
</dbReference>
<dbReference type="GO" id="GO:0005681">
    <property type="term" value="C:spliceosomal complex"/>
    <property type="evidence" value="ECO:0007669"/>
    <property type="project" value="UniProtKB-KW"/>
</dbReference>
<dbReference type="GO" id="GO:0046540">
    <property type="term" value="C:U4/U6 x U5 tri-snRNP complex"/>
    <property type="evidence" value="ECO:0000318"/>
    <property type="project" value="GO_Central"/>
</dbReference>
<dbReference type="GO" id="GO:0005688">
    <property type="term" value="C:U6 snRNP"/>
    <property type="evidence" value="ECO:0000318"/>
    <property type="project" value="GO_Central"/>
</dbReference>
<dbReference type="GO" id="GO:0003723">
    <property type="term" value="F:RNA binding"/>
    <property type="evidence" value="ECO:0000318"/>
    <property type="project" value="GO_Central"/>
</dbReference>
<dbReference type="GO" id="GO:0000290">
    <property type="term" value="P:deadenylation-dependent decapping of nuclear-transcribed mRNA"/>
    <property type="evidence" value="ECO:0007669"/>
    <property type="project" value="EnsemblFungi"/>
</dbReference>
<dbReference type="GO" id="GO:0030490">
    <property type="term" value="P:maturation of SSU-rRNA"/>
    <property type="evidence" value="ECO:0000318"/>
    <property type="project" value="GO_Central"/>
</dbReference>
<dbReference type="GO" id="GO:0000398">
    <property type="term" value="P:mRNA splicing, via spliceosome"/>
    <property type="evidence" value="ECO:0000318"/>
    <property type="project" value="GO_Central"/>
</dbReference>
<dbReference type="GO" id="GO:0008033">
    <property type="term" value="P:tRNA processing"/>
    <property type="evidence" value="ECO:0007669"/>
    <property type="project" value="UniProtKB-KW"/>
</dbReference>
<dbReference type="FunFam" id="2.30.30.100:FF:000037">
    <property type="entry name" value="U6 snRNA-associated Sm-like protein LSm6"/>
    <property type="match status" value="1"/>
</dbReference>
<dbReference type="Gene3D" id="2.30.30.100">
    <property type="match status" value="1"/>
</dbReference>
<dbReference type="InterPro" id="IPR016487">
    <property type="entry name" value="Lsm6/sSmF"/>
</dbReference>
<dbReference type="InterPro" id="IPR010920">
    <property type="entry name" value="LSM_dom_sf"/>
</dbReference>
<dbReference type="InterPro" id="IPR047575">
    <property type="entry name" value="Sm"/>
</dbReference>
<dbReference type="InterPro" id="IPR001163">
    <property type="entry name" value="Sm_dom_euk/arc"/>
</dbReference>
<dbReference type="PANTHER" id="PTHR11021">
    <property type="entry name" value="SMALL NUCLEAR RIBONUCLEOPROTEIN F SNRNP-F"/>
    <property type="match status" value="1"/>
</dbReference>
<dbReference type="PANTHER" id="PTHR11021:SF1">
    <property type="entry name" value="U6 SNRNA-ASSOCIATED SM-LIKE PROTEIN LSM6"/>
    <property type="match status" value="1"/>
</dbReference>
<dbReference type="Pfam" id="PF01423">
    <property type="entry name" value="LSM"/>
    <property type="match status" value="1"/>
</dbReference>
<dbReference type="SMART" id="SM00651">
    <property type="entry name" value="Sm"/>
    <property type="match status" value="1"/>
</dbReference>
<dbReference type="SUPFAM" id="SSF50182">
    <property type="entry name" value="Sm-like ribonucleoproteins"/>
    <property type="match status" value="1"/>
</dbReference>
<dbReference type="PROSITE" id="PS52002">
    <property type="entry name" value="SM"/>
    <property type="match status" value="1"/>
</dbReference>
<gene>
    <name type="primary">LSM6</name>
    <name type="ordered locus">ACR204C</name>
</gene>
<name>LSM6_EREGS</name>
<evidence type="ECO:0000250" key="1"/>
<evidence type="ECO:0000255" key="2">
    <source>
        <dbReference type="PROSITE-ProRule" id="PRU01346"/>
    </source>
</evidence>
<evidence type="ECO:0000305" key="3"/>
<comment type="function">
    <text evidence="1">Component of LSm protein complexes, which are involved in RNA processing and may function in a chaperone-like manner, facilitating the efficient association of RNA processing factors with their substrates. Component of the cytoplasmic LSM1-LSM7 complex, which is thought to be involved in mRNA degradation by activating the decapping step in the 5'-to-3' mRNA decay pathway. Component of the nuclear LSM2-LSM8 complex, which is involved in splicing of nuclear mRNAs. LSM2-LSM8 associates with multiple snRNP complexes containing the U6 snRNA (U4/U6 di-snRNP, spliceosomal U4/U6.U5 tri-snRNP, and free U6 snRNP). It binds directly to the 3'-terminal U-tract of U6 snRNA and plays a role in the biogenesis and stability of the U6 snRNP and U4/U6 snRNP complexes. LSM2-LSM8 probably also is involved degradation of nuclear pre-mRNA by targeting them for decapping, and in processing of pre-tRNAs, pre-rRNAs and U3 snoRNA (By similarity).</text>
</comment>
<comment type="subunit">
    <text evidence="1">Component of the heptameric LSM1-LSM7 complex, which consists of LSM1, LSM2, LSM3, LSM4, LSM5, LSM6 and LSM7. Component of the heptameric LSM2-LSM8 complex, which consists of LSM2, LSM3, LSM4, LSM5, LSM6, LSM7 and LSM8. The LSm subunits form a seven-membered ring structure with a doughnut shape (By similarity).</text>
</comment>
<comment type="subcellular location">
    <subcellularLocation>
        <location evidence="1">Cytoplasm</location>
    </subcellularLocation>
    <subcellularLocation>
        <location evidence="1">Nucleus</location>
    </subcellularLocation>
</comment>
<comment type="similarity">
    <text evidence="3">Belongs to the snRNP Sm proteins family. SmF/LSm6 subfamily.</text>
</comment>
<accession>Q75BR7</accession>
<feature type="chain" id="PRO_0000333587" description="U6 snRNA-associated Sm-like protein LSm6">
    <location>
        <begin position="1"/>
        <end position="85"/>
    </location>
</feature>
<feature type="domain" description="Sm" evidence="2">
    <location>
        <begin position="12"/>
        <end position="85"/>
    </location>
</feature>
<protein>
    <recommendedName>
        <fullName>U6 snRNA-associated Sm-like protein LSm6</fullName>
    </recommendedName>
</protein>
<reference key="1">
    <citation type="journal article" date="2004" name="Science">
        <title>The Ashbya gossypii genome as a tool for mapping the ancient Saccharomyces cerevisiae genome.</title>
        <authorList>
            <person name="Dietrich F.S."/>
            <person name="Voegeli S."/>
            <person name="Brachat S."/>
            <person name="Lerch A."/>
            <person name="Gates K."/>
            <person name="Steiner S."/>
            <person name="Mohr C."/>
            <person name="Poehlmann R."/>
            <person name="Luedi P."/>
            <person name="Choi S."/>
            <person name="Wing R.A."/>
            <person name="Flavier A."/>
            <person name="Gaffney T.D."/>
            <person name="Philippsen P."/>
        </authorList>
    </citation>
    <scope>NUCLEOTIDE SEQUENCE [LARGE SCALE GENOMIC DNA]</scope>
    <source>
        <strain>ATCC 10895 / CBS 109.51 / FGSC 9923 / NRRL Y-1056</strain>
    </source>
</reference>
<reference key="2">
    <citation type="journal article" date="2013" name="G3 (Bethesda)">
        <title>Genomes of Ashbya fungi isolated from insects reveal four mating-type loci, numerous translocations, lack of transposons, and distinct gene duplications.</title>
        <authorList>
            <person name="Dietrich F.S."/>
            <person name="Voegeli S."/>
            <person name="Kuo S."/>
            <person name="Philippsen P."/>
        </authorList>
    </citation>
    <scope>GENOME REANNOTATION</scope>
    <source>
        <strain>ATCC 10895 / CBS 109.51 / FGSC 9923 / NRRL Y-1056</strain>
    </source>
</reference>
<sequence length="85" mass="9382">MSSAMQGPAVTSSSTFLSNIIGKPVNVKLHSGMLYQGTLESIDGFMNVALVDASEYYESEQNPVIHRYESDVFLRGTQVMYISEL</sequence>
<proteinExistence type="inferred from homology"/>
<organism>
    <name type="scientific">Eremothecium gossypii (strain ATCC 10895 / CBS 109.51 / FGSC 9923 / NRRL Y-1056)</name>
    <name type="common">Yeast</name>
    <name type="synonym">Ashbya gossypii</name>
    <dbReference type="NCBI Taxonomy" id="284811"/>
    <lineage>
        <taxon>Eukaryota</taxon>
        <taxon>Fungi</taxon>
        <taxon>Dikarya</taxon>
        <taxon>Ascomycota</taxon>
        <taxon>Saccharomycotina</taxon>
        <taxon>Saccharomycetes</taxon>
        <taxon>Saccharomycetales</taxon>
        <taxon>Saccharomycetaceae</taxon>
        <taxon>Eremothecium</taxon>
    </lineage>
</organism>
<keyword id="KW-0963">Cytoplasm</keyword>
<keyword id="KW-0507">mRNA processing</keyword>
<keyword id="KW-0508">mRNA splicing</keyword>
<keyword id="KW-0539">Nucleus</keyword>
<keyword id="KW-1185">Reference proteome</keyword>
<keyword id="KW-0687">Ribonucleoprotein</keyword>
<keyword id="KW-0694">RNA-binding</keyword>
<keyword id="KW-0698">rRNA processing</keyword>
<keyword id="KW-0747">Spliceosome</keyword>
<keyword id="KW-0819">tRNA processing</keyword>